<feature type="chain" id="PRO_0000356240" description="CAAX prenyl protease 1 homolog">
    <location>
        <begin position="1"/>
        <end position="424"/>
    </location>
</feature>
<feature type="transmembrane region" description="Helical" evidence="2">
    <location>
        <begin position="3"/>
        <end position="23"/>
    </location>
</feature>
<feature type="transmembrane region" description="Helical" evidence="2">
    <location>
        <begin position="67"/>
        <end position="87"/>
    </location>
</feature>
<feature type="transmembrane region" description="Helical" evidence="2">
    <location>
        <begin position="109"/>
        <end position="129"/>
    </location>
</feature>
<feature type="transmembrane region" description="Helical" evidence="2">
    <location>
        <begin position="155"/>
        <end position="175"/>
    </location>
</feature>
<feature type="transmembrane region" description="Helical" evidence="2">
    <location>
        <begin position="185"/>
        <end position="205"/>
    </location>
</feature>
<feature type="transmembrane region" description="Helical" evidence="2">
    <location>
        <begin position="295"/>
        <end position="315"/>
    </location>
</feature>
<feature type="transmembrane region" description="Helical" evidence="2">
    <location>
        <begin position="332"/>
        <end position="352"/>
    </location>
</feature>
<feature type="active site" evidence="1">
    <location>
        <position position="285"/>
    </location>
</feature>
<feature type="active site" description="Proton donor" evidence="1">
    <location>
        <position position="366"/>
    </location>
</feature>
<feature type="binding site" evidence="1">
    <location>
        <position position="284"/>
    </location>
    <ligand>
        <name>Zn(2+)</name>
        <dbReference type="ChEBI" id="CHEBI:29105"/>
        <note>catalytic</note>
    </ligand>
</feature>
<feature type="binding site" evidence="1">
    <location>
        <position position="288"/>
    </location>
    <ligand>
        <name>Zn(2+)</name>
        <dbReference type="ChEBI" id="CHEBI:29105"/>
        <note>catalytic</note>
    </ligand>
</feature>
<feature type="binding site" evidence="1">
    <location>
        <position position="362"/>
    </location>
    <ligand>
        <name>Zn(2+)</name>
        <dbReference type="ChEBI" id="CHEBI:29105"/>
        <note>catalytic</note>
    </ligand>
</feature>
<feature type="mutagenesis site" description="Loss of activity." evidence="3">
    <original>H</original>
    <variation>A</variation>
    <location>
        <position position="284"/>
    </location>
</feature>
<feature type="sequence conflict" description="In Ref. 4; AAL07084." evidence="5" ref="4">
    <original>G</original>
    <variation>W</variation>
    <location>
        <position position="81"/>
    </location>
</feature>
<feature type="sequence conflict" description="In Ref. 4; AAL07084." evidence="5" ref="4">
    <original>D</original>
    <variation>G</variation>
    <location>
        <position position="266"/>
    </location>
</feature>
<feature type="sequence conflict" description="In Ref. 1; AAK39514." evidence="5" ref="1">
    <original>Y</original>
    <variation>H</variation>
    <location>
        <position position="399"/>
    </location>
</feature>
<accession>Q8RX88</accession>
<accession>O04602</accession>
<accession>Q93ZV9</accession>
<accession>Q94FS8</accession>
<accession>Q9M139</accession>
<dbReference type="EC" id="3.4.24.84"/>
<dbReference type="EMBL" id="AF353722">
    <property type="protein sequence ID" value="AAK39514.1"/>
    <property type="molecule type" value="mRNA"/>
</dbReference>
<dbReference type="EMBL" id="AF007269">
    <property type="protein sequence ID" value="AAB61028.1"/>
    <property type="status" value="ALT_SEQ"/>
    <property type="molecule type" value="Genomic_DNA"/>
</dbReference>
<dbReference type="EMBL" id="AL161491">
    <property type="protein sequence ID" value="CAB80941.1"/>
    <property type="status" value="ALT_SEQ"/>
    <property type="molecule type" value="Genomic_DNA"/>
</dbReference>
<dbReference type="EMBL" id="CP002687">
    <property type="protein sequence ID" value="AEE82008.1"/>
    <property type="molecule type" value="Genomic_DNA"/>
</dbReference>
<dbReference type="EMBL" id="AY056235">
    <property type="protein sequence ID" value="AAL07084.1"/>
    <property type="molecule type" value="mRNA"/>
</dbReference>
<dbReference type="EMBL" id="AY090232">
    <property type="protein sequence ID" value="AAL90896.1"/>
    <property type="molecule type" value="mRNA"/>
</dbReference>
<dbReference type="EMBL" id="BT006355">
    <property type="protein sequence ID" value="AAP21163.1"/>
    <property type="molecule type" value="mRNA"/>
</dbReference>
<dbReference type="PIR" id="C85017">
    <property type="entry name" value="C85017"/>
</dbReference>
<dbReference type="PIR" id="T01712">
    <property type="entry name" value="T01712"/>
</dbReference>
<dbReference type="RefSeq" id="NP_567212.1">
    <property type="nucleotide sequence ID" value="NM_116362.3"/>
</dbReference>
<dbReference type="SMR" id="Q8RX88"/>
<dbReference type="FunCoup" id="Q8RX88">
    <property type="interactions" value="4765"/>
</dbReference>
<dbReference type="STRING" id="3702.Q8RX88"/>
<dbReference type="TCDB" id="9.B.1.1.2">
    <property type="family name" value="the integral membrane caax protease (caax protease) family"/>
</dbReference>
<dbReference type="PaxDb" id="3702-AT4G01320.1"/>
<dbReference type="ProteomicsDB" id="230844"/>
<dbReference type="EnsemblPlants" id="AT4G01320.1">
    <property type="protein sequence ID" value="AT4G01320.1"/>
    <property type="gene ID" value="AT4G01320"/>
</dbReference>
<dbReference type="GeneID" id="828209"/>
<dbReference type="Gramene" id="AT4G01320.1">
    <property type="protein sequence ID" value="AT4G01320.1"/>
    <property type="gene ID" value="AT4G01320"/>
</dbReference>
<dbReference type="KEGG" id="ath:AT4G01320"/>
<dbReference type="Araport" id="AT4G01320"/>
<dbReference type="TAIR" id="AT4G01320">
    <property type="gene designation" value="ATSTE24"/>
</dbReference>
<dbReference type="eggNOG" id="KOG2719">
    <property type="taxonomic scope" value="Eukaryota"/>
</dbReference>
<dbReference type="HOGENOM" id="CLU_025947_3_3_1"/>
<dbReference type="InParanoid" id="Q8RX88"/>
<dbReference type="OMA" id="FVIEEKF"/>
<dbReference type="OrthoDB" id="360839at2759"/>
<dbReference type="PhylomeDB" id="Q8RX88"/>
<dbReference type="BRENDA" id="3.4.24.84">
    <property type="organism ID" value="399"/>
</dbReference>
<dbReference type="PRO" id="PR:Q8RX88"/>
<dbReference type="Proteomes" id="UP000006548">
    <property type="component" value="Chromosome 4"/>
</dbReference>
<dbReference type="ExpressionAtlas" id="Q8RX88">
    <property type="expression patterns" value="baseline and differential"/>
</dbReference>
<dbReference type="GO" id="GO:0005829">
    <property type="term" value="C:cytosol"/>
    <property type="evidence" value="ECO:0007005"/>
    <property type="project" value="TAIR"/>
</dbReference>
<dbReference type="GO" id="GO:0005783">
    <property type="term" value="C:endoplasmic reticulum"/>
    <property type="evidence" value="ECO:0000314"/>
    <property type="project" value="TAIR"/>
</dbReference>
<dbReference type="GO" id="GO:0005789">
    <property type="term" value="C:endoplasmic reticulum membrane"/>
    <property type="evidence" value="ECO:0007669"/>
    <property type="project" value="UniProtKB-SubCell"/>
</dbReference>
<dbReference type="GO" id="GO:0005773">
    <property type="term" value="C:vacuole"/>
    <property type="evidence" value="ECO:0007005"/>
    <property type="project" value="TAIR"/>
</dbReference>
<dbReference type="GO" id="GO:0004175">
    <property type="term" value="F:endopeptidase activity"/>
    <property type="evidence" value="ECO:0000314"/>
    <property type="project" value="TAIR"/>
</dbReference>
<dbReference type="GO" id="GO:0046872">
    <property type="term" value="F:metal ion binding"/>
    <property type="evidence" value="ECO:0007669"/>
    <property type="project" value="UniProtKB-KW"/>
</dbReference>
<dbReference type="GO" id="GO:0004222">
    <property type="term" value="F:metalloendopeptidase activity"/>
    <property type="evidence" value="ECO:0000250"/>
    <property type="project" value="TAIR"/>
</dbReference>
<dbReference type="GO" id="GO:0080120">
    <property type="term" value="P:CAAX-box protein maturation"/>
    <property type="evidence" value="ECO:0000314"/>
    <property type="project" value="TAIR"/>
</dbReference>
<dbReference type="GO" id="GO:0071586">
    <property type="term" value="P:CAAX-box protein processing"/>
    <property type="evidence" value="ECO:0007669"/>
    <property type="project" value="InterPro"/>
</dbReference>
<dbReference type="GO" id="GO:0006508">
    <property type="term" value="P:proteolysis"/>
    <property type="evidence" value="ECO:0000314"/>
    <property type="project" value="TAIR"/>
</dbReference>
<dbReference type="CDD" id="cd07343">
    <property type="entry name" value="M48A_Zmpste24p_like"/>
    <property type="match status" value="1"/>
</dbReference>
<dbReference type="FunFam" id="3.30.2010.10:FF:000005">
    <property type="entry name" value="CAAX prenyl protease"/>
    <property type="match status" value="1"/>
</dbReference>
<dbReference type="Gene3D" id="3.30.2010.10">
    <property type="entry name" value="Metalloproteases ('zincins'), catalytic domain"/>
    <property type="match status" value="1"/>
</dbReference>
<dbReference type="InterPro" id="IPR027057">
    <property type="entry name" value="CAXX_Prtase_1"/>
</dbReference>
<dbReference type="InterPro" id="IPR001915">
    <property type="entry name" value="Peptidase_M48"/>
</dbReference>
<dbReference type="InterPro" id="IPR032456">
    <property type="entry name" value="Peptidase_M48_N"/>
</dbReference>
<dbReference type="PANTHER" id="PTHR10120">
    <property type="entry name" value="CAAX PRENYL PROTEASE 1"/>
    <property type="match status" value="1"/>
</dbReference>
<dbReference type="Pfam" id="PF01435">
    <property type="entry name" value="Peptidase_M48"/>
    <property type="match status" value="1"/>
</dbReference>
<dbReference type="Pfam" id="PF16491">
    <property type="entry name" value="Peptidase_M48_N"/>
    <property type="match status" value="1"/>
</dbReference>
<reference key="1">
    <citation type="journal article" date="2002" name="J. Biol. Chem.">
        <title>The Arabidopsis AtSTE24 is a CAAX protease with broad substrate specificity.</title>
        <authorList>
            <person name="Bracha K."/>
            <person name="Lavy M."/>
            <person name="Yalovsky S."/>
        </authorList>
    </citation>
    <scope>NUCLEOTIDE SEQUENCE [MRNA]</scope>
    <scope>FUNCTION</scope>
    <scope>MUTAGENESIS OF HIS-284</scope>
    <scope>TISSUE SPECIFICITY</scope>
    <scope>SUBCELLULAR LOCATION</scope>
</reference>
<reference key="2">
    <citation type="journal article" date="1999" name="Nature">
        <title>Sequence and analysis of chromosome 4 of the plant Arabidopsis thaliana.</title>
        <authorList>
            <person name="Mayer K.F.X."/>
            <person name="Schueller C."/>
            <person name="Wambutt R."/>
            <person name="Murphy G."/>
            <person name="Volckaert G."/>
            <person name="Pohl T."/>
            <person name="Duesterhoeft A."/>
            <person name="Stiekema W."/>
            <person name="Entian K.-D."/>
            <person name="Terryn N."/>
            <person name="Harris B."/>
            <person name="Ansorge W."/>
            <person name="Brandt P."/>
            <person name="Grivell L.A."/>
            <person name="Rieger M."/>
            <person name="Weichselgartner M."/>
            <person name="de Simone V."/>
            <person name="Obermaier B."/>
            <person name="Mache R."/>
            <person name="Mueller M."/>
            <person name="Kreis M."/>
            <person name="Delseny M."/>
            <person name="Puigdomenech P."/>
            <person name="Watson M."/>
            <person name="Schmidtheini T."/>
            <person name="Reichert B."/>
            <person name="Portetelle D."/>
            <person name="Perez-Alonso M."/>
            <person name="Boutry M."/>
            <person name="Bancroft I."/>
            <person name="Vos P."/>
            <person name="Hoheisel J."/>
            <person name="Zimmermann W."/>
            <person name="Wedler H."/>
            <person name="Ridley P."/>
            <person name="Langham S.-A."/>
            <person name="McCullagh B."/>
            <person name="Bilham L."/>
            <person name="Robben J."/>
            <person name="van der Schueren J."/>
            <person name="Grymonprez B."/>
            <person name="Chuang Y.-J."/>
            <person name="Vandenbussche F."/>
            <person name="Braeken M."/>
            <person name="Weltjens I."/>
            <person name="Voet M."/>
            <person name="Bastiaens I."/>
            <person name="Aert R."/>
            <person name="Defoor E."/>
            <person name="Weitzenegger T."/>
            <person name="Bothe G."/>
            <person name="Ramsperger U."/>
            <person name="Hilbert H."/>
            <person name="Braun M."/>
            <person name="Holzer E."/>
            <person name="Brandt A."/>
            <person name="Peters S."/>
            <person name="van Staveren M."/>
            <person name="Dirkse W."/>
            <person name="Mooijman P."/>
            <person name="Klein Lankhorst R."/>
            <person name="Rose M."/>
            <person name="Hauf J."/>
            <person name="Koetter P."/>
            <person name="Berneiser S."/>
            <person name="Hempel S."/>
            <person name="Feldpausch M."/>
            <person name="Lamberth S."/>
            <person name="Van den Daele H."/>
            <person name="De Keyser A."/>
            <person name="Buysshaert C."/>
            <person name="Gielen J."/>
            <person name="Villarroel R."/>
            <person name="De Clercq R."/>
            <person name="van Montagu M."/>
            <person name="Rogers J."/>
            <person name="Cronin A."/>
            <person name="Quail M.A."/>
            <person name="Bray-Allen S."/>
            <person name="Clark L."/>
            <person name="Doggett J."/>
            <person name="Hall S."/>
            <person name="Kay M."/>
            <person name="Lennard N."/>
            <person name="McLay K."/>
            <person name="Mayes R."/>
            <person name="Pettett A."/>
            <person name="Rajandream M.A."/>
            <person name="Lyne M."/>
            <person name="Benes V."/>
            <person name="Rechmann S."/>
            <person name="Borkova D."/>
            <person name="Bloecker H."/>
            <person name="Scharfe M."/>
            <person name="Grimm M."/>
            <person name="Loehnert T.-H."/>
            <person name="Dose S."/>
            <person name="de Haan M."/>
            <person name="Maarse A.C."/>
            <person name="Schaefer M."/>
            <person name="Mueller-Auer S."/>
            <person name="Gabel C."/>
            <person name="Fuchs M."/>
            <person name="Fartmann B."/>
            <person name="Granderath K."/>
            <person name="Dauner D."/>
            <person name="Herzl A."/>
            <person name="Neumann S."/>
            <person name="Argiriou A."/>
            <person name="Vitale D."/>
            <person name="Liguori R."/>
            <person name="Piravandi E."/>
            <person name="Massenet O."/>
            <person name="Quigley F."/>
            <person name="Clabauld G."/>
            <person name="Muendlein A."/>
            <person name="Felber R."/>
            <person name="Schnabl S."/>
            <person name="Hiller R."/>
            <person name="Schmidt W."/>
            <person name="Lecharny A."/>
            <person name="Aubourg S."/>
            <person name="Chefdor F."/>
            <person name="Cooke R."/>
            <person name="Berger C."/>
            <person name="Monfort A."/>
            <person name="Casacuberta E."/>
            <person name="Gibbons T."/>
            <person name="Weber N."/>
            <person name="Vandenbol M."/>
            <person name="Bargues M."/>
            <person name="Terol J."/>
            <person name="Torres A."/>
            <person name="Perez-Perez A."/>
            <person name="Purnelle B."/>
            <person name="Bent E."/>
            <person name="Johnson S."/>
            <person name="Tacon D."/>
            <person name="Jesse T."/>
            <person name="Heijnen L."/>
            <person name="Schwarz S."/>
            <person name="Scholler P."/>
            <person name="Heber S."/>
            <person name="Francs P."/>
            <person name="Bielke C."/>
            <person name="Frishman D."/>
            <person name="Haase D."/>
            <person name="Lemcke K."/>
            <person name="Mewes H.-W."/>
            <person name="Stocker S."/>
            <person name="Zaccaria P."/>
            <person name="Bevan M."/>
            <person name="Wilson R.K."/>
            <person name="de la Bastide M."/>
            <person name="Habermann K."/>
            <person name="Parnell L."/>
            <person name="Dedhia N."/>
            <person name="Gnoj L."/>
            <person name="Schutz K."/>
            <person name="Huang E."/>
            <person name="Spiegel L."/>
            <person name="Sekhon M."/>
            <person name="Murray J."/>
            <person name="Sheet P."/>
            <person name="Cordes M."/>
            <person name="Abu-Threideh J."/>
            <person name="Stoneking T."/>
            <person name="Kalicki J."/>
            <person name="Graves T."/>
            <person name="Harmon G."/>
            <person name="Edwards J."/>
            <person name="Latreille P."/>
            <person name="Courtney L."/>
            <person name="Cloud J."/>
            <person name="Abbott A."/>
            <person name="Scott K."/>
            <person name="Johnson D."/>
            <person name="Minx P."/>
            <person name="Bentley D."/>
            <person name="Fulton B."/>
            <person name="Miller N."/>
            <person name="Greco T."/>
            <person name="Kemp K."/>
            <person name="Kramer J."/>
            <person name="Fulton L."/>
            <person name="Mardis E."/>
            <person name="Dante M."/>
            <person name="Pepin K."/>
            <person name="Hillier L.W."/>
            <person name="Nelson J."/>
            <person name="Spieth J."/>
            <person name="Ryan E."/>
            <person name="Andrews S."/>
            <person name="Geisel C."/>
            <person name="Layman D."/>
            <person name="Du H."/>
            <person name="Ali J."/>
            <person name="Berghoff A."/>
            <person name="Jones K."/>
            <person name="Drone K."/>
            <person name="Cotton M."/>
            <person name="Joshu C."/>
            <person name="Antonoiu B."/>
            <person name="Zidanic M."/>
            <person name="Strong C."/>
            <person name="Sun H."/>
            <person name="Lamar B."/>
            <person name="Yordan C."/>
            <person name="Ma P."/>
            <person name="Zhong J."/>
            <person name="Preston R."/>
            <person name="Vil D."/>
            <person name="Shekher M."/>
            <person name="Matero A."/>
            <person name="Shah R."/>
            <person name="Swaby I.K."/>
            <person name="O'Shaughnessy A."/>
            <person name="Rodriguez M."/>
            <person name="Hoffman J."/>
            <person name="Till S."/>
            <person name="Granat S."/>
            <person name="Shohdy N."/>
            <person name="Hasegawa A."/>
            <person name="Hameed A."/>
            <person name="Lodhi M."/>
            <person name="Johnson A."/>
            <person name="Chen E."/>
            <person name="Marra M.A."/>
            <person name="Martienssen R."/>
            <person name="McCombie W.R."/>
        </authorList>
    </citation>
    <scope>NUCLEOTIDE SEQUENCE [LARGE SCALE GENOMIC DNA]</scope>
    <source>
        <strain>cv. Columbia</strain>
    </source>
</reference>
<reference key="3">
    <citation type="journal article" date="2017" name="Plant J.">
        <title>Araport11: a complete reannotation of the Arabidopsis thaliana reference genome.</title>
        <authorList>
            <person name="Cheng C.Y."/>
            <person name="Krishnakumar V."/>
            <person name="Chan A.P."/>
            <person name="Thibaud-Nissen F."/>
            <person name="Schobel S."/>
            <person name="Town C.D."/>
        </authorList>
    </citation>
    <scope>GENOME REANNOTATION</scope>
    <source>
        <strain>cv. Columbia</strain>
    </source>
</reference>
<reference key="4">
    <citation type="journal article" date="2003" name="Science">
        <title>Empirical analysis of transcriptional activity in the Arabidopsis genome.</title>
        <authorList>
            <person name="Yamada K."/>
            <person name="Lim J."/>
            <person name="Dale J.M."/>
            <person name="Chen H."/>
            <person name="Shinn P."/>
            <person name="Palm C.J."/>
            <person name="Southwick A.M."/>
            <person name="Wu H.C."/>
            <person name="Kim C.J."/>
            <person name="Nguyen M."/>
            <person name="Pham P.K."/>
            <person name="Cheuk R.F."/>
            <person name="Karlin-Newmann G."/>
            <person name="Liu S.X."/>
            <person name="Lam B."/>
            <person name="Sakano H."/>
            <person name="Wu T."/>
            <person name="Yu G."/>
            <person name="Miranda M."/>
            <person name="Quach H.L."/>
            <person name="Tripp M."/>
            <person name="Chang C.H."/>
            <person name="Lee J.M."/>
            <person name="Toriumi M.J."/>
            <person name="Chan M.M."/>
            <person name="Tang C.C."/>
            <person name="Onodera C.S."/>
            <person name="Deng J.M."/>
            <person name="Akiyama K."/>
            <person name="Ansari Y."/>
            <person name="Arakawa T."/>
            <person name="Banh J."/>
            <person name="Banno F."/>
            <person name="Bowser L."/>
            <person name="Brooks S.Y."/>
            <person name="Carninci P."/>
            <person name="Chao Q."/>
            <person name="Choy N."/>
            <person name="Enju A."/>
            <person name="Goldsmith A.D."/>
            <person name="Gurjal M."/>
            <person name="Hansen N.F."/>
            <person name="Hayashizaki Y."/>
            <person name="Johnson-Hopson C."/>
            <person name="Hsuan V.W."/>
            <person name="Iida K."/>
            <person name="Karnes M."/>
            <person name="Khan S."/>
            <person name="Koesema E."/>
            <person name="Ishida J."/>
            <person name="Jiang P.X."/>
            <person name="Jones T."/>
            <person name="Kawai J."/>
            <person name="Kamiya A."/>
            <person name="Meyers C."/>
            <person name="Nakajima M."/>
            <person name="Narusaka M."/>
            <person name="Seki M."/>
            <person name="Sakurai T."/>
            <person name="Satou M."/>
            <person name="Tamse R."/>
            <person name="Vaysberg M."/>
            <person name="Wallender E.K."/>
            <person name="Wong C."/>
            <person name="Yamamura Y."/>
            <person name="Yuan S."/>
            <person name="Shinozaki K."/>
            <person name="Davis R.W."/>
            <person name="Theologis A."/>
            <person name="Ecker J.R."/>
        </authorList>
    </citation>
    <scope>NUCLEOTIDE SEQUENCE [LARGE SCALE MRNA]</scope>
    <source>
        <strain>cv. Columbia</strain>
    </source>
</reference>
<reference key="5">
    <citation type="journal article" date="2003" name="J. Biol. Chem.">
        <title>AtFACE-2, a functional prenylated protein protease from Arabidopsis thaliana related to mammalian Ras-converting enzymes.</title>
        <authorList>
            <person name="Cadinanos J."/>
            <person name="Varela I."/>
            <person name="Mandel D.A."/>
            <person name="Schmidt W.K."/>
            <person name="Diaz-Perales A."/>
            <person name="Lopez-Otin C."/>
            <person name="Freije J.M."/>
        </authorList>
    </citation>
    <scope>SUBSTRATE SPECIFICITY</scope>
</reference>
<reference key="6">
    <citation type="journal article" date="2008" name="Plant Physiol.">
        <title>Functional analysis of Arabidopsis postprenylation CaaX processing enzymes and their function in subcellular protein targeting.</title>
        <authorList>
            <person name="Bracha-Drori K."/>
            <person name="Shichrur K."/>
            <person name="Lubetzky T.C."/>
            <person name="Yalovsky S."/>
        </authorList>
    </citation>
    <scope>SUBCELLULAR LOCATION</scope>
</reference>
<sequence length="424" mass="48482">MAIPFMETVVGFMIVMYIFETYLDLRQLTALKLPTLPKTLVGVISQEKFEKSRAYSLDKSYFHFVHEFVTILMDSAILFFGILPWFWKMSGAVLPRLGLDPENEILHTLSFLAGVMTWSQITDLPFSLYSTFVIESRHGFNKQTIWMFIRDMIKGTFLSVILGPPIVAAIIFIVQKGGPYLAIYLWAFMFILSLVMMTIYPVLIAPLFNKFTPLPDGDLREKIEKLASSLKFPLKKLFVVDGSTRSSHSNAYMYGFFKNKRIVLYDTLIQQCKNEDEIVAVIAHELGHWKLNHTTYSFIAVQILAFLQFGGYTLVRNSTDLFRSFGFDTQPVLIGLIIFQHTVIPLQHLVSFGLNLVSRAFEFQADAFAVKLGYAKDLRPALVKLQEENLSAMNTDPLYSAYHYSHPPLVERLRAIDGEDKKTD</sequence>
<keyword id="KW-0256">Endoplasmic reticulum</keyword>
<keyword id="KW-0378">Hydrolase</keyword>
<keyword id="KW-0472">Membrane</keyword>
<keyword id="KW-0479">Metal-binding</keyword>
<keyword id="KW-0482">Metalloprotease</keyword>
<keyword id="KW-0645">Protease</keyword>
<keyword id="KW-1185">Reference proteome</keyword>
<keyword id="KW-0812">Transmembrane</keyword>
<keyword id="KW-1133">Transmembrane helix</keyword>
<keyword id="KW-0862">Zinc</keyword>
<name>FACE1_ARATH</name>
<proteinExistence type="evidence at protein level"/>
<gene>
    <name type="primary">FACE1</name>
    <name type="synonym">STE24</name>
    <name type="ordered locus">At4g01320</name>
    <name type="ORF">A_IG002N01.21</name>
    <name type="ORF">F2N1.21</name>
</gene>
<protein>
    <recommendedName>
        <fullName>CAAX prenyl protease 1 homolog</fullName>
        <ecNumber>3.4.24.84</ecNumber>
    </recommendedName>
    <alternativeName>
        <fullName>Farnesylated proteins-converting enzyme 1</fullName>
        <shortName>AtFACE-1</shortName>
        <shortName>FACE-1</shortName>
    </alternativeName>
    <alternativeName>
        <fullName>Prenyl protein-specific endoprotease 1</fullName>
    </alternativeName>
    <alternativeName>
        <fullName>Zinc metalloproteinase Ste24 homolog</fullName>
        <shortName>AtSTE24</shortName>
    </alternativeName>
</protein>
<organism>
    <name type="scientific">Arabidopsis thaliana</name>
    <name type="common">Mouse-ear cress</name>
    <dbReference type="NCBI Taxonomy" id="3702"/>
    <lineage>
        <taxon>Eukaryota</taxon>
        <taxon>Viridiplantae</taxon>
        <taxon>Streptophyta</taxon>
        <taxon>Embryophyta</taxon>
        <taxon>Tracheophyta</taxon>
        <taxon>Spermatophyta</taxon>
        <taxon>Magnoliopsida</taxon>
        <taxon>eudicotyledons</taxon>
        <taxon>Gunneridae</taxon>
        <taxon>Pentapetalae</taxon>
        <taxon>rosids</taxon>
        <taxon>malvids</taxon>
        <taxon>Brassicales</taxon>
        <taxon>Brassicaceae</taxon>
        <taxon>Camelineae</taxon>
        <taxon>Arabidopsis</taxon>
    </lineage>
</organism>
<evidence type="ECO:0000250" key="1"/>
<evidence type="ECO:0000255" key="2"/>
<evidence type="ECO:0000269" key="3">
    <source>
    </source>
</evidence>
<evidence type="ECO:0000269" key="4">
    <source>
    </source>
</evidence>
<evidence type="ECO:0000305" key="5"/>
<comment type="function">
    <text evidence="3">Proteolytically removes the C-terminal three residues of farnesylated proteins. The substrate specificity is only partially overlapping with that of FACE2.</text>
</comment>
<comment type="catalytic activity">
    <reaction>
        <text>Hydrolyzes the peptide bond -P2-(S-farnesyl or geranylgeranyl)C-P1'-P2'-P3'-COOH where P1' and P2' are amino acids with aliphatic side chains and P3' is any C-terminal residue.</text>
        <dbReference type="EC" id="3.4.24.84"/>
    </reaction>
</comment>
<comment type="cofactor">
    <cofactor evidence="1">
        <name>Zn(2+)</name>
        <dbReference type="ChEBI" id="CHEBI:29105"/>
    </cofactor>
    <text evidence="1">Binds 1 zinc ion per subunit.</text>
</comment>
<comment type="subcellular location">
    <subcellularLocation>
        <location evidence="3 4">Endoplasmic reticulum membrane</location>
        <topology evidence="3 4">Multi-pass membrane protein</topology>
    </subcellularLocation>
</comment>
<comment type="tissue specificity">
    <text evidence="3">Expressed in leaves, stems and flowers.</text>
</comment>
<comment type="similarity">
    <text evidence="5">Belongs to the peptidase M48A family.</text>
</comment>
<comment type="sequence caution" evidence="5">
    <conflict type="erroneous gene model prediction">
        <sequence resource="EMBL-CDS" id="AAB61028"/>
    </conflict>
</comment>
<comment type="sequence caution" evidence="5">
    <conflict type="erroneous gene model prediction">
        <sequence resource="EMBL-CDS" id="CAB80941"/>
    </conflict>
</comment>